<sequence length="412" mass="47770">MQFFNFLLFYPVFMSIYWIVGSIYFYFTREIRYSLNKKPDINVDELEGITFLLACYNESETIEDTLSNVLALKYEKKEIIIINDGSSDNTAELIYKIKENNDFIFVDLQENRGKANALNQGIKQASYDYVMCLDADTIVDQDAPYYMIENFKHDPKLGAVTGNPRIRNKSSILGKIQTIEYASLIGCIKRSQTLAGAVNTISGVFTLFKKSAVVDVGYWDTDMITEDIAVSWKLHLRGYRIKYEPLAMCWMLVPETLGGLWKQRVRWAQGGHEVLLRDFFSTMKTKRFPLYILMFEQIISILWVYIVLLYLGYLFITANFLDYTFMTYSFSIFLLSSFTMTFINVIQFTVALFIDSRYEKKNMAGLIFVSWYPTVYWIINAAVVLVAFPKALKRKKGGYATWSSPDRGNTQR</sequence>
<organism>
    <name type="scientific">Staphylococcus aureus (strain NCTC 8325 / PS 47)</name>
    <dbReference type="NCBI Taxonomy" id="93061"/>
    <lineage>
        <taxon>Bacteria</taxon>
        <taxon>Bacillati</taxon>
        <taxon>Bacillota</taxon>
        <taxon>Bacilli</taxon>
        <taxon>Bacillales</taxon>
        <taxon>Staphylococcaceae</taxon>
        <taxon>Staphylococcus</taxon>
    </lineage>
</organism>
<dbReference type="EC" id="2.4.1.-"/>
<dbReference type="EMBL" id="AF086783">
    <property type="protein sequence ID" value="AAD52055.1"/>
    <property type="molecule type" value="Genomic_DNA"/>
</dbReference>
<dbReference type="EMBL" id="CP000253">
    <property type="protein sequence ID" value="ABD31989.1"/>
    <property type="molecule type" value="Genomic_DNA"/>
</dbReference>
<dbReference type="RefSeq" id="WP_001159430.1">
    <property type="nucleotide sequence ID" value="NZ_LS483365.1"/>
</dbReference>
<dbReference type="RefSeq" id="YP_501451.1">
    <property type="nucleotide sequence ID" value="NC_007795.1"/>
</dbReference>
<dbReference type="SMR" id="Q9RQP9"/>
<dbReference type="STRING" id="93061.SAOUHSC_03002"/>
<dbReference type="CAZy" id="GT2">
    <property type="family name" value="Glycosyltransferase Family 2"/>
</dbReference>
<dbReference type="PaxDb" id="1280-SAXN108_2939"/>
<dbReference type="GeneID" id="3921484"/>
<dbReference type="KEGG" id="sao:SAOUHSC_03002"/>
<dbReference type="PATRIC" id="fig|93061.5.peg.2709"/>
<dbReference type="eggNOG" id="COG1215">
    <property type="taxonomic scope" value="Bacteria"/>
</dbReference>
<dbReference type="HOGENOM" id="CLU_023978_0_1_9"/>
<dbReference type="OrthoDB" id="9766299at2"/>
<dbReference type="PHI-base" id="PHI:9883"/>
<dbReference type="PRO" id="PR:Q9RQP9"/>
<dbReference type="Proteomes" id="UP000008816">
    <property type="component" value="Chromosome"/>
</dbReference>
<dbReference type="GO" id="GO:0005886">
    <property type="term" value="C:plasma membrane"/>
    <property type="evidence" value="ECO:0007669"/>
    <property type="project" value="UniProtKB-SubCell"/>
</dbReference>
<dbReference type="GO" id="GO:0008375">
    <property type="term" value="F:acetylglucosaminyltransferase activity"/>
    <property type="evidence" value="ECO:0007669"/>
    <property type="project" value="InterPro"/>
</dbReference>
<dbReference type="GO" id="GO:0043708">
    <property type="term" value="P:cell adhesion involved in biofilm formation"/>
    <property type="evidence" value="ECO:0007669"/>
    <property type="project" value="InterPro"/>
</dbReference>
<dbReference type="CDD" id="cd06423">
    <property type="entry name" value="CESA_like"/>
    <property type="match status" value="1"/>
</dbReference>
<dbReference type="Gene3D" id="3.90.550.10">
    <property type="entry name" value="Spore Coat Polysaccharide Biosynthesis Protein SpsA, Chain A"/>
    <property type="match status" value="1"/>
</dbReference>
<dbReference type="InterPro" id="IPR001173">
    <property type="entry name" value="Glyco_trans_2-like"/>
</dbReference>
<dbReference type="InterPro" id="IPR029044">
    <property type="entry name" value="Nucleotide-diphossugar_trans"/>
</dbReference>
<dbReference type="InterPro" id="IPR023853">
    <property type="entry name" value="PGA_PgaC/IcaA"/>
</dbReference>
<dbReference type="NCBIfam" id="TIGR03937">
    <property type="entry name" value="PgaC_IcaA"/>
    <property type="match status" value="1"/>
</dbReference>
<dbReference type="PANTHER" id="PTHR43630">
    <property type="entry name" value="POLY-BETA-1,6-N-ACETYL-D-GLUCOSAMINE SYNTHASE"/>
    <property type="match status" value="1"/>
</dbReference>
<dbReference type="PANTHER" id="PTHR43630:SF1">
    <property type="entry name" value="POLY-BETA-1,6-N-ACETYL-D-GLUCOSAMINE SYNTHASE"/>
    <property type="match status" value="1"/>
</dbReference>
<dbReference type="Pfam" id="PF00535">
    <property type="entry name" value="Glycos_transf_2"/>
    <property type="match status" value="1"/>
</dbReference>
<dbReference type="SUPFAM" id="SSF53448">
    <property type="entry name" value="Nucleotide-diphospho-sugar transferases"/>
    <property type="match status" value="1"/>
</dbReference>
<reference key="1">
    <citation type="journal article" date="1999" name="Infect. Immun.">
        <title>The intercellular adhesion (ica) locus is present in Staphylococcus aureus and is required for biofilm formation.</title>
        <authorList>
            <person name="Cramton S.E."/>
            <person name="Gerke C."/>
            <person name="Schnell N.F."/>
            <person name="Nichols W.W."/>
            <person name="Goetz F."/>
        </authorList>
    </citation>
    <scope>NUCLEOTIDE SEQUENCE [GENOMIC DNA]</scope>
    <scope>ROLE IN BIOFILM FORMATION</scope>
    <scope>DISRUPTION PHENOTYPE</scope>
</reference>
<reference key="2">
    <citation type="book" date="2006" name="Gram positive pathogens, 2nd edition">
        <title>The Staphylococcus aureus NCTC 8325 genome.</title>
        <editorList>
            <person name="Fischetti V."/>
            <person name="Novick R."/>
            <person name="Ferretti J."/>
            <person name="Portnoy D."/>
            <person name="Rood J."/>
        </editorList>
        <authorList>
            <person name="Gillaspy A.F."/>
            <person name="Worrell V."/>
            <person name="Orvis J."/>
            <person name="Roe B.A."/>
            <person name="Dyer D.W."/>
            <person name="Iandolo J.J."/>
        </authorList>
    </citation>
    <scope>NUCLEOTIDE SEQUENCE [LARGE SCALE GENOMIC DNA]</scope>
    <source>
        <strain>NCTC 8325 / PS 47</strain>
    </source>
</reference>
<proteinExistence type="inferred from homology"/>
<comment type="function">
    <text evidence="1">N-acetylglucosaminyltransferase that catalyzes the polymerization of single monomer units of UDP-N-acetylglucosamine to produce the linear homomer poly-beta-1,6-N-acetyl-D-glucosamine (PNAG, also referred to as PIA), a biofilm adhesin polysaccharide. Requires IcaD for full activity (By similarity).</text>
</comment>
<comment type="subcellular location">
    <subcellularLocation>
        <location evidence="1">Cell membrane</location>
        <topology evidence="1">Multi-pass membrane protein</topology>
    </subcellularLocation>
</comment>
<comment type="disruption phenotype">
    <text evidence="3">Deletion of the icaADBCR genes leads to the inability to form biofilms, produce PIA or mediate N-acetylglucosaminyltransferase activity in vitro.</text>
</comment>
<comment type="similarity">
    <text evidence="4">Belongs to the glycosyltransferase 2 family.</text>
</comment>
<protein>
    <recommendedName>
        <fullName>Poly-beta-1,6-N-acetyl-D-glucosamine synthase</fullName>
        <shortName>PNAG synthase</shortName>
        <shortName>Poly-beta-1,6-GlcNAc synthase</shortName>
        <ecNumber>2.4.1.-</ecNumber>
    </recommendedName>
    <alternativeName>
        <fullName>Biofilm polysaccharide intercellular adhesin synthesis protein IcaA</fullName>
        <shortName>Biofilm PIA synthesis protein IcaA</shortName>
    </alternativeName>
    <alternativeName>
        <fullName>Intercellular adhesion protein A</fullName>
    </alternativeName>
    <alternativeName>
        <fullName>N-acetylglucosaminyltransferase IcaA</fullName>
    </alternativeName>
</protein>
<name>ICAA_STAA8</name>
<accession>Q9RQP9</accession>
<accession>Q2FUU9</accession>
<gene>
    <name type="primary">icaA</name>
    <name type="ordered locus">SAOUHSC_03002</name>
</gene>
<evidence type="ECO:0000250" key="1"/>
<evidence type="ECO:0000255" key="2"/>
<evidence type="ECO:0000269" key="3">
    <source>
    </source>
</evidence>
<evidence type="ECO:0000305" key="4"/>
<feature type="chain" id="PRO_0000059275" description="Poly-beta-1,6-N-acetyl-D-glucosamine synthase">
    <location>
        <begin position="1"/>
        <end position="412"/>
    </location>
</feature>
<feature type="transmembrane region" description="Helical" evidence="2">
    <location>
        <begin position="6"/>
        <end position="26"/>
    </location>
</feature>
<feature type="transmembrane region" description="Helical" evidence="2">
    <location>
        <begin position="298"/>
        <end position="318"/>
    </location>
</feature>
<feature type="transmembrane region" description="Helical" evidence="2">
    <location>
        <begin position="332"/>
        <end position="352"/>
    </location>
</feature>
<feature type="transmembrane region" description="Helical" evidence="2">
    <location>
        <begin position="366"/>
        <end position="386"/>
    </location>
</feature>
<feature type="sequence conflict" description="In Ref. 1; AAD52055." evidence="4" ref="1">
    <original>K</original>
    <variation>R</variation>
    <location>
        <position position="396"/>
    </location>
</feature>
<keyword id="KW-1003">Cell membrane</keyword>
<keyword id="KW-0328">Glycosyltransferase</keyword>
<keyword id="KW-0472">Membrane</keyword>
<keyword id="KW-1185">Reference proteome</keyword>
<keyword id="KW-0808">Transferase</keyword>
<keyword id="KW-0812">Transmembrane</keyword>
<keyword id="KW-1133">Transmembrane helix</keyword>